<evidence type="ECO:0000255" key="1">
    <source>
        <dbReference type="HAMAP-Rule" id="MF_01306"/>
    </source>
</evidence>
<evidence type="ECO:0000256" key="2">
    <source>
        <dbReference type="SAM" id="MobiDB-lite"/>
    </source>
</evidence>
<evidence type="ECO:0000305" key="3"/>
<feature type="chain" id="PRO_0000132405" description="Small ribosomal subunit protein uS4">
    <location>
        <begin position="1"/>
        <end position="200"/>
    </location>
</feature>
<feature type="domain" description="S4 RNA-binding" evidence="1">
    <location>
        <begin position="92"/>
        <end position="170"/>
    </location>
</feature>
<feature type="region of interest" description="Disordered" evidence="2">
    <location>
        <begin position="22"/>
        <end position="43"/>
    </location>
</feature>
<organism>
    <name type="scientific">Listeria innocua serovar 6a (strain ATCC BAA-680 / CLIP 11262)</name>
    <dbReference type="NCBI Taxonomy" id="272626"/>
    <lineage>
        <taxon>Bacteria</taxon>
        <taxon>Bacillati</taxon>
        <taxon>Bacillota</taxon>
        <taxon>Bacilli</taxon>
        <taxon>Bacillales</taxon>
        <taxon>Listeriaceae</taxon>
        <taxon>Listeria</taxon>
    </lineage>
</organism>
<dbReference type="EMBL" id="AL596169">
    <property type="protein sequence ID" value="CAC96869.1"/>
    <property type="molecule type" value="Genomic_DNA"/>
</dbReference>
<dbReference type="PIR" id="AE1637">
    <property type="entry name" value="AE1637"/>
</dbReference>
<dbReference type="RefSeq" id="WP_003762477.1">
    <property type="nucleotide sequence ID" value="NC_003212.1"/>
</dbReference>
<dbReference type="PDB" id="8UU9">
    <property type="method" value="EM"/>
    <property type="resolution" value="3.10 A"/>
    <property type="chains" value="d=1-200"/>
</dbReference>
<dbReference type="PDBsum" id="8UU9"/>
<dbReference type="EMDB" id="EMD-42576"/>
<dbReference type="SMR" id="Q92BB2"/>
<dbReference type="STRING" id="272626.gene:17565969"/>
<dbReference type="GeneID" id="93235020"/>
<dbReference type="KEGG" id="lin:rpsD"/>
<dbReference type="eggNOG" id="COG0522">
    <property type="taxonomic scope" value="Bacteria"/>
</dbReference>
<dbReference type="HOGENOM" id="CLU_092403_0_1_9"/>
<dbReference type="OrthoDB" id="9803672at2"/>
<dbReference type="Proteomes" id="UP000002513">
    <property type="component" value="Chromosome"/>
</dbReference>
<dbReference type="GO" id="GO:0015935">
    <property type="term" value="C:small ribosomal subunit"/>
    <property type="evidence" value="ECO:0007669"/>
    <property type="project" value="InterPro"/>
</dbReference>
<dbReference type="GO" id="GO:0019843">
    <property type="term" value="F:rRNA binding"/>
    <property type="evidence" value="ECO:0007669"/>
    <property type="project" value="UniProtKB-UniRule"/>
</dbReference>
<dbReference type="GO" id="GO:0003735">
    <property type="term" value="F:structural constituent of ribosome"/>
    <property type="evidence" value="ECO:0007669"/>
    <property type="project" value="InterPro"/>
</dbReference>
<dbReference type="GO" id="GO:0042274">
    <property type="term" value="P:ribosomal small subunit biogenesis"/>
    <property type="evidence" value="ECO:0007669"/>
    <property type="project" value="TreeGrafter"/>
</dbReference>
<dbReference type="GO" id="GO:0006412">
    <property type="term" value="P:translation"/>
    <property type="evidence" value="ECO:0007669"/>
    <property type="project" value="UniProtKB-UniRule"/>
</dbReference>
<dbReference type="CDD" id="cd00165">
    <property type="entry name" value="S4"/>
    <property type="match status" value="1"/>
</dbReference>
<dbReference type="FunFam" id="1.10.1050.10:FF:000001">
    <property type="entry name" value="30S ribosomal protein S4"/>
    <property type="match status" value="1"/>
</dbReference>
<dbReference type="FunFam" id="3.10.290.10:FF:000001">
    <property type="entry name" value="30S ribosomal protein S4"/>
    <property type="match status" value="1"/>
</dbReference>
<dbReference type="Gene3D" id="1.10.1050.10">
    <property type="entry name" value="Ribosomal Protein S4 Delta 41, Chain A, domain 1"/>
    <property type="match status" value="1"/>
</dbReference>
<dbReference type="Gene3D" id="3.10.290.10">
    <property type="entry name" value="RNA-binding S4 domain"/>
    <property type="match status" value="1"/>
</dbReference>
<dbReference type="HAMAP" id="MF_01306_B">
    <property type="entry name" value="Ribosomal_uS4_B"/>
    <property type="match status" value="1"/>
</dbReference>
<dbReference type="InterPro" id="IPR022801">
    <property type="entry name" value="Ribosomal_uS4"/>
</dbReference>
<dbReference type="InterPro" id="IPR005709">
    <property type="entry name" value="Ribosomal_uS4_bac-type"/>
</dbReference>
<dbReference type="InterPro" id="IPR018079">
    <property type="entry name" value="Ribosomal_uS4_CS"/>
</dbReference>
<dbReference type="InterPro" id="IPR001912">
    <property type="entry name" value="Ribosomal_uS4_N"/>
</dbReference>
<dbReference type="InterPro" id="IPR002942">
    <property type="entry name" value="S4_RNA-bd"/>
</dbReference>
<dbReference type="InterPro" id="IPR036986">
    <property type="entry name" value="S4_RNA-bd_sf"/>
</dbReference>
<dbReference type="NCBIfam" id="NF003717">
    <property type="entry name" value="PRK05327.1"/>
    <property type="match status" value="1"/>
</dbReference>
<dbReference type="NCBIfam" id="TIGR01017">
    <property type="entry name" value="rpsD_bact"/>
    <property type="match status" value="1"/>
</dbReference>
<dbReference type="PANTHER" id="PTHR11831">
    <property type="entry name" value="30S 40S RIBOSOMAL PROTEIN"/>
    <property type="match status" value="1"/>
</dbReference>
<dbReference type="PANTHER" id="PTHR11831:SF4">
    <property type="entry name" value="SMALL RIBOSOMAL SUBUNIT PROTEIN US4M"/>
    <property type="match status" value="1"/>
</dbReference>
<dbReference type="Pfam" id="PF00163">
    <property type="entry name" value="Ribosomal_S4"/>
    <property type="match status" value="1"/>
</dbReference>
<dbReference type="Pfam" id="PF01479">
    <property type="entry name" value="S4"/>
    <property type="match status" value="1"/>
</dbReference>
<dbReference type="SMART" id="SM01390">
    <property type="entry name" value="Ribosomal_S4"/>
    <property type="match status" value="1"/>
</dbReference>
<dbReference type="SMART" id="SM00363">
    <property type="entry name" value="S4"/>
    <property type="match status" value="1"/>
</dbReference>
<dbReference type="SUPFAM" id="SSF55174">
    <property type="entry name" value="Alpha-L RNA-binding motif"/>
    <property type="match status" value="1"/>
</dbReference>
<dbReference type="PROSITE" id="PS00632">
    <property type="entry name" value="RIBOSOMAL_S4"/>
    <property type="match status" value="1"/>
</dbReference>
<dbReference type="PROSITE" id="PS50889">
    <property type="entry name" value="S4"/>
    <property type="match status" value="1"/>
</dbReference>
<comment type="function">
    <text evidence="1">One of the primary rRNA binding proteins, it binds directly to 16S rRNA where it nucleates assembly of the body of the 30S subunit.</text>
</comment>
<comment type="function">
    <text evidence="1">With S5 and S12 plays an important role in translational accuracy.</text>
</comment>
<comment type="subunit">
    <text evidence="1">Part of the 30S ribosomal subunit. Contacts protein S5. The interaction surface between S4 and S5 is involved in control of translational fidelity.</text>
</comment>
<comment type="similarity">
    <text evidence="1">Belongs to the universal ribosomal protein uS4 family.</text>
</comment>
<protein>
    <recommendedName>
        <fullName evidence="1">Small ribosomal subunit protein uS4</fullName>
    </recommendedName>
    <alternativeName>
        <fullName evidence="3">30S ribosomal protein S4</fullName>
    </alternativeName>
</protein>
<proteinExistence type="evidence at protein level"/>
<sequence>MARYTGPSWKVSRRLGISLSGTGKELERRPYAPGQHGPTQRKKISEYGLQQAEKQKLRHMYGLTERQFKNTFNKAGKLQGKHGENFMILLEQRLDNIVYRLGLARTRRAARQLVNHGHITVDGKRVDIPSYQVSVGQVISVREKSAKNSAIAESLEVSSFVPEYVTFDAETLTGSLNRLPERSELAAEINEAFIVEFYSR</sequence>
<name>RS4_LISIN</name>
<accession>Q92BB2</accession>
<reference key="1">
    <citation type="journal article" date="2001" name="Science">
        <title>Comparative genomics of Listeria species.</title>
        <authorList>
            <person name="Glaser P."/>
            <person name="Frangeul L."/>
            <person name="Buchrieser C."/>
            <person name="Rusniok C."/>
            <person name="Amend A."/>
            <person name="Baquero F."/>
            <person name="Berche P."/>
            <person name="Bloecker H."/>
            <person name="Brandt P."/>
            <person name="Chakraborty T."/>
            <person name="Charbit A."/>
            <person name="Chetouani F."/>
            <person name="Couve E."/>
            <person name="de Daruvar A."/>
            <person name="Dehoux P."/>
            <person name="Domann E."/>
            <person name="Dominguez-Bernal G."/>
            <person name="Duchaud E."/>
            <person name="Durant L."/>
            <person name="Dussurget O."/>
            <person name="Entian K.-D."/>
            <person name="Fsihi H."/>
            <person name="Garcia-del Portillo F."/>
            <person name="Garrido P."/>
            <person name="Gautier L."/>
            <person name="Goebel W."/>
            <person name="Gomez-Lopez N."/>
            <person name="Hain T."/>
            <person name="Hauf J."/>
            <person name="Jackson D."/>
            <person name="Jones L.-M."/>
            <person name="Kaerst U."/>
            <person name="Kreft J."/>
            <person name="Kuhn M."/>
            <person name="Kunst F."/>
            <person name="Kurapkat G."/>
            <person name="Madueno E."/>
            <person name="Maitournam A."/>
            <person name="Mata Vicente J."/>
            <person name="Ng E."/>
            <person name="Nedjari H."/>
            <person name="Nordsiek G."/>
            <person name="Novella S."/>
            <person name="de Pablos B."/>
            <person name="Perez-Diaz J.-C."/>
            <person name="Purcell R."/>
            <person name="Remmel B."/>
            <person name="Rose M."/>
            <person name="Schlueter T."/>
            <person name="Simoes N."/>
            <person name="Tierrez A."/>
            <person name="Vazquez-Boland J.-A."/>
            <person name="Voss H."/>
            <person name="Wehland J."/>
            <person name="Cossart P."/>
        </authorList>
    </citation>
    <scope>NUCLEOTIDE SEQUENCE [LARGE SCALE GENOMIC DNA]</scope>
    <source>
        <strain>ATCC BAA-680 / CLIP 11262</strain>
    </source>
</reference>
<gene>
    <name evidence="1" type="primary">rpsD</name>
    <name type="ordered locus">lin1638</name>
</gene>
<keyword id="KW-0002">3D-structure</keyword>
<keyword id="KW-0687">Ribonucleoprotein</keyword>
<keyword id="KW-0689">Ribosomal protein</keyword>
<keyword id="KW-0694">RNA-binding</keyword>
<keyword id="KW-0699">rRNA-binding</keyword>